<comment type="function">
    <text evidence="2 3">Catalyzes the first step of diphthamide biosynthesis, a post-translational modification of histidine which occurs in elongation factor 2 (By similarity). Dph1 and dph2 transfer a 3-amino-3-carboxypropyl (ACP) group from S-adenosyl-L-methionine (SAM) to a histidine residue, the reaction is assisted by a reduction system comprising dph3 and a NADH-dependent reductase (By similarity).</text>
</comment>
<comment type="catalytic activity">
    <reaction evidence="3">
        <text>L-histidyl-[translation elongation factor 2] + S-adenosyl-L-methionine = 2-[(3S)-amino-3-carboxypropyl]-L-histidyl-[translation elongation factor 2] + S-methyl-5'-thioadenosine + H(+)</text>
        <dbReference type="Rhea" id="RHEA:36783"/>
        <dbReference type="Rhea" id="RHEA-COMP:9748"/>
        <dbReference type="Rhea" id="RHEA-COMP:9749"/>
        <dbReference type="ChEBI" id="CHEBI:15378"/>
        <dbReference type="ChEBI" id="CHEBI:17509"/>
        <dbReference type="ChEBI" id="CHEBI:29979"/>
        <dbReference type="ChEBI" id="CHEBI:59789"/>
        <dbReference type="ChEBI" id="CHEBI:73995"/>
        <dbReference type="EC" id="2.5.1.108"/>
    </reaction>
</comment>
<comment type="cofactor">
    <cofactor evidence="2">
        <name>[4Fe-4S] cluster</name>
        <dbReference type="ChEBI" id="CHEBI:49883"/>
    </cofactor>
    <text evidence="2">Binds 1 [4Fe-4S] cluster per subunit. The cluster is coordinated with 3 cysteines and an exchangeable S-adenosyl-L-methionine.</text>
</comment>
<comment type="pathway">
    <text>Protein modification; peptidyl-diphthamide biosynthesis.</text>
</comment>
<comment type="subunit">
    <text evidence="2">Component of the 2-(3-amino-3-carboxypropyl)histidine synthase complex composed of dph1, dph2, dph3 and a NADH-dependent reductase.</text>
</comment>
<comment type="similarity">
    <text evidence="4">Belongs to the DPH1/DPH2 family. DPH1 subfamily.</text>
</comment>
<keyword id="KW-0408">Iron</keyword>
<keyword id="KW-0411">Iron-sulfur</keyword>
<keyword id="KW-0479">Metal-binding</keyword>
<keyword id="KW-1185">Reference proteome</keyword>
<keyword id="KW-0949">S-adenosyl-L-methionine</keyword>
<keyword id="KW-0808">Transferase</keyword>
<protein>
    <recommendedName>
        <fullName evidence="4">2-(3-amino-3-carboxypropyl)histidine synthase subunit 1</fullName>
        <ecNumber evidence="3">2.5.1.108</ecNumber>
    </recommendedName>
    <alternativeName>
        <fullName>Diphthamide biosynthesis protein 1</fullName>
    </alternativeName>
    <alternativeName>
        <fullName evidence="4">Diphtheria toxin resistance protein 1</fullName>
    </alternativeName>
    <alternativeName>
        <fullName evidence="4">S-adenosyl-L-methionine:L-histidine 3-amino-3-carboxypropyltransferase 1</fullName>
    </alternativeName>
</protein>
<reference key="1">
    <citation type="journal article" date="2005" name="Nature">
        <title>The genome of the social amoeba Dictyostelium discoideum.</title>
        <authorList>
            <person name="Eichinger L."/>
            <person name="Pachebat J.A."/>
            <person name="Gloeckner G."/>
            <person name="Rajandream M.A."/>
            <person name="Sucgang R."/>
            <person name="Berriman M."/>
            <person name="Song J."/>
            <person name="Olsen R."/>
            <person name="Szafranski K."/>
            <person name="Xu Q."/>
            <person name="Tunggal B."/>
            <person name="Kummerfeld S."/>
            <person name="Madera M."/>
            <person name="Konfortov B.A."/>
            <person name="Rivero F."/>
            <person name="Bankier A.T."/>
            <person name="Lehmann R."/>
            <person name="Hamlin N."/>
            <person name="Davies R."/>
            <person name="Gaudet P."/>
            <person name="Fey P."/>
            <person name="Pilcher K."/>
            <person name="Chen G."/>
            <person name="Saunders D."/>
            <person name="Sodergren E.J."/>
            <person name="Davis P."/>
            <person name="Kerhornou A."/>
            <person name="Nie X."/>
            <person name="Hall N."/>
            <person name="Anjard C."/>
            <person name="Hemphill L."/>
            <person name="Bason N."/>
            <person name="Farbrother P."/>
            <person name="Desany B."/>
            <person name="Just E."/>
            <person name="Morio T."/>
            <person name="Rost R."/>
            <person name="Churcher C.M."/>
            <person name="Cooper J."/>
            <person name="Haydock S."/>
            <person name="van Driessche N."/>
            <person name="Cronin A."/>
            <person name="Goodhead I."/>
            <person name="Muzny D.M."/>
            <person name="Mourier T."/>
            <person name="Pain A."/>
            <person name="Lu M."/>
            <person name="Harper D."/>
            <person name="Lindsay R."/>
            <person name="Hauser H."/>
            <person name="James K.D."/>
            <person name="Quiles M."/>
            <person name="Madan Babu M."/>
            <person name="Saito T."/>
            <person name="Buchrieser C."/>
            <person name="Wardroper A."/>
            <person name="Felder M."/>
            <person name="Thangavelu M."/>
            <person name="Johnson D."/>
            <person name="Knights A."/>
            <person name="Loulseged H."/>
            <person name="Mungall K.L."/>
            <person name="Oliver K."/>
            <person name="Price C."/>
            <person name="Quail M.A."/>
            <person name="Urushihara H."/>
            <person name="Hernandez J."/>
            <person name="Rabbinowitsch E."/>
            <person name="Steffen D."/>
            <person name="Sanders M."/>
            <person name="Ma J."/>
            <person name="Kohara Y."/>
            <person name="Sharp S."/>
            <person name="Simmonds M.N."/>
            <person name="Spiegler S."/>
            <person name="Tivey A."/>
            <person name="Sugano S."/>
            <person name="White B."/>
            <person name="Walker D."/>
            <person name="Woodward J.R."/>
            <person name="Winckler T."/>
            <person name="Tanaka Y."/>
            <person name="Shaulsky G."/>
            <person name="Schleicher M."/>
            <person name="Weinstock G.M."/>
            <person name="Rosenthal A."/>
            <person name="Cox E.C."/>
            <person name="Chisholm R.L."/>
            <person name="Gibbs R.A."/>
            <person name="Loomis W.F."/>
            <person name="Platzer M."/>
            <person name="Kay R.R."/>
            <person name="Williams J.G."/>
            <person name="Dear P.H."/>
            <person name="Noegel A.A."/>
            <person name="Barrell B.G."/>
            <person name="Kuspa A."/>
        </authorList>
    </citation>
    <scope>NUCLEOTIDE SEQUENCE [LARGE SCALE GENOMIC DNA]</scope>
    <source>
        <strain>AX4</strain>
    </source>
</reference>
<sequence length="472" mass="53452">MSDSNNIEDNVVINTITNTDTNDTTPPTTDTNTTPSVTLKRRFVGKKKIAAQQQQQNENIDNVTTTKTTTTTTTTTTPITKDIVTTEKKVKVFGRGLAMAAQQIPDEIMNDKELNLAVKILPSNYNFEIFKTIWRIKQASAKRVALQFPEGLLMYSCIISDIIEKFASVETIIMGDVTYGACCVDDYTARSLGADFMVHYGHSCLIPIDVSEIKMLYVFVDIQFDLQHFIETLKFNFKQTQKLIMVSTIQFSASLQSSREPLSEYFSNIFIPQEKPLSPGEILGCTSPKIKFTSPDGDEENNEIVIYLGDGRFHLESIMISNPHVKSYRYDPYSKVFSLEKYDFQEMYKIRRDAIETASKATKFGIILGTLGRQGSPKILDHLEQLLKSNGKHYTTVLLSEIFPAKLDMFSDIESWIQIACPRLSIDWGYAFTTPLLNPYEAEVCLGGINWQSVYPMDFYSKEGGKWTNYSK</sequence>
<accession>Q54PW5</accession>
<proteinExistence type="inferred from homology"/>
<gene>
    <name type="primary">dph1</name>
    <name type="ORF">DDB_G0284257</name>
</gene>
<dbReference type="EC" id="2.5.1.108" evidence="3"/>
<dbReference type="EMBL" id="AAFI02000064">
    <property type="protein sequence ID" value="EAL65317.1"/>
    <property type="molecule type" value="Genomic_DNA"/>
</dbReference>
<dbReference type="RefSeq" id="XP_638680.1">
    <property type="nucleotide sequence ID" value="XM_633588.1"/>
</dbReference>
<dbReference type="SMR" id="Q54PW5"/>
<dbReference type="FunCoup" id="Q54PW5">
    <property type="interactions" value="215"/>
</dbReference>
<dbReference type="STRING" id="44689.Q54PW5"/>
<dbReference type="PaxDb" id="44689-DDB0238860"/>
<dbReference type="EnsemblProtists" id="EAL65317">
    <property type="protein sequence ID" value="EAL65317"/>
    <property type="gene ID" value="DDB_G0284257"/>
</dbReference>
<dbReference type="GeneID" id="8624509"/>
<dbReference type="KEGG" id="ddi:DDB_G0284257"/>
<dbReference type="dictyBase" id="DDB_G0284257">
    <property type="gene designation" value="dph1"/>
</dbReference>
<dbReference type="VEuPathDB" id="AmoebaDB:DDB_G0284257"/>
<dbReference type="eggNOG" id="KOG2648">
    <property type="taxonomic scope" value="Eukaryota"/>
</dbReference>
<dbReference type="HOGENOM" id="CLU_037146_1_1_1"/>
<dbReference type="InParanoid" id="Q54PW5"/>
<dbReference type="OMA" id="PGQVLGC"/>
<dbReference type="PhylomeDB" id="Q54PW5"/>
<dbReference type="Reactome" id="R-DDI-5358493">
    <property type="pathway name" value="Synthesis of diphthamide-EEF2"/>
</dbReference>
<dbReference type="UniPathway" id="UPA00559"/>
<dbReference type="PRO" id="PR:Q54PW5"/>
<dbReference type="Proteomes" id="UP000002195">
    <property type="component" value="Chromosome 4"/>
</dbReference>
<dbReference type="GO" id="GO:0120513">
    <property type="term" value="C:2-(3-amino-3-carboxypropyl)histidine synthase complex"/>
    <property type="evidence" value="ECO:0000250"/>
    <property type="project" value="UniProtKB"/>
</dbReference>
<dbReference type="GO" id="GO:0090560">
    <property type="term" value="F:2-(3-amino-3-carboxypropyl)histidine synthase activity"/>
    <property type="evidence" value="ECO:0007669"/>
    <property type="project" value="UniProtKB-EC"/>
</dbReference>
<dbReference type="GO" id="GO:0051539">
    <property type="term" value="F:4 iron, 4 sulfur cluster binding"/>
    <property type="evidence" value="ECO:0000250"/>
    <property type="project" value="UniProtKB"/>
</dbReference>
<dbReference type="GO" id="GO:0046872">
    <property type="term" value="F:metal ion binding"/>
    <property type="evidence" value="ECO:0007669"/>
    <property type="project" value="UniProtKB-KW"/>
</dbReference>
<dbReference type="GO" id="GO:0017183">
    <property type="term" value="P:protein histidyl modification to diphthamide"/>
    <property type="evidence" value="ECO:0000250"/>
    <property type="project" value="UniProtKB"/>
</dbReference>
<dbReference type="FunFam" id="3.40.50.11840:FF:000001">
    <property type="entry name" value="2-(3-amino-3-carboxypropyl)histidine synthase subunit 1"/>
    <property type="match status" value="1"/>
</dbReference>
<dbReference type="FunFam" id="3.40.50.11850:FF:000002">
    <property type="entry name" value="2-(3-amino-3-carboxypropyl)histidine synthase subunit 1"/>
    <property type="match status" value="1"/>
</dbReference>
<dbReference type="FunFam" id="3.40.50.11860:FF:000002">
    <property type="entry name" value="2-(3-amino-3-carboxypropyl)histidine synthase subunit 1"/>
    <property type="match status" value="1"/>
</dbReference>
<dbReference type="Gene3D" id="3.40.50.11840">
    <property type="entry name" value="Diphthamide synthesis DPH1/DPH2 domain 1"/>
    <property type="match status" value="1"/>
</dbReference>
<dbReference type="Gene3D" id="3.40.50.11850">
    <property type="entry name" value="Diphthamide synthesis DPH1/DPH2 domain 2"/>
    <property type="match status" value="1"/>
</dbReference>
<dbReference type="Gene3D" id="3.40.50.11860">
    <property type="entry name" value="Diphthamide synthesis DPH1/DPH2 domain 3"/>
    <property type="match status" value="1"/>
</dbReference>
<dbReference type="InterPro" id="IPR016435">
    <property type="entry name" value="DPH1/DPH2"/>
</dbReference>
<dbReference type="InterPro" id="IPR042263">
    <property type="entry name" value="DPH1/DPH2_1"/>
</dbReference>
<dbReference type="InterPro" id="IPR042264">
    <property type="entry name" value="DPH1/DPH2_2"/>
</dbReference>
<dbReference type="InterPro" id="IPR042265">
    <property type="entry name" value="DPH1/DPH2_3"/>
</dbReference>
<dbReference type="NCBIfam" id="TIGR00322">
    <property type="entry name" value="diphth2_R"/>
    <property type="match status" value="1"/>
</dbReference>
<dbReference type="PANTHER" id="PTHR10762:SF1">
    <property type="entry name" value="2-(3-AMINO-3-CARBOXYPROPYL)HISTIDINE SYNTHASE SUBUNIT 1"/>
    <property type="match status" value="1"/>
</dbReference>
<dbReference type="PANTHER" id="PTHR10762">
    <property type="entry name" value="DIPHTHAMIDE BIOSYNTHESIS PROTEIN"/>
    <property type="match status" value="1"/>
</dbReference>
<dbReference type="Pfam" id="PF01866">
    <property type="entry name" value="Diphthamide_syn"/>
    <property type="match status" value="1"/>
</dbReference>
<dbReference type="SFLD" id="SFLDG01121">
    <property type="entry name" value="Diphthamide_biosynthesis"/>
    <property type="match status" value="1"/>
</dbReference>
<dbReference type="SFLD" id="SFLDS00032">
    <property type="entry name" value="Radical_SAM_3-amino-3-carboxyp"/>
    <property type="match status" value="1"/>
</dbReference>
<feature type="chain" id="PRO_0000329958" description="2-(3-amino-3-carboxypropyl)histidine synthase subunit 1">
    <location>
        <begin position="1"/>
        <end position="472"/>
    </location>
</feature>
<feature type="binding site" evidence="1">
    <location>
        <position position="182"/>
    </location>
    <ligand>
        <name>[4Fe-4S] cluster</name>
        <dbReference type="ChEBI" id="CHEBI:49883"/>
    </ligand>
</feature>
<feature type="binding site" evidence="1">
    <location>
        <position position="285"/>
    </location>
    <ligand>
        <name>[4Fe-4S] cluster</name>
        <dbReference type="ChEBI" id="CHEBI:49883"/>
    </ligand>
</feature>
<feature type="binding site" evidence="1">
    <location>
        <position position="421"/>
    </location>
    <ligand>
        <name>[4Fe-4S] cluster</name>
        <dbReference type="ChEBI" id="CHEBI:49883"/>
    </ligand>
</feature>
<evidence type="ECO:0000250" key="1">
    <source>
        <dbReference type="UniProtKB" id="O58832"/>
    </source>
</evidence>
<evidence type="ECO:0000250" key="2">
    <source>
        <dbReference type="UniProtKB" id="P40487"/>
    </source>
</evidence>
<evidence type="ECO:0000250" key="3">
    <source>
        <dbReference type="UniProtKB" id="Q5NCQ5"/>
    </source>
</evidence>
<evidence type="ECO:0000305" key="4"/>
<name>DPH1_DICDI</name>
<organism>
    <name type="scientific">Dictyostelium discoideum</name>
    <name type="common">Social amoeba</name>
    <dbReference type="NCBI Taxonomy" id="44689"/>
    <lineage>
        <taxon>Eukaryota</taxon>
        <taxon>Amoebozoa</taxon>
        <taxon>Evosea</taxon>
        <taxon>Eumycetozoa</taxon>
        <taxon>Dictyostelia</taxon>
        <taxon>Dictyosteliales</taxon>
        <taxon>Dictyosteliaceae</taxon>
        <taxon>Dictyostelium</taxon>
    </lineage>
</organism>